<proteinExistence type="inferred from homology"/>
<name>DAGK_STAA3</name>
<accession>Q2FFJ7</accession>
<protein>
    <recommendedName>
        <fullName>Diacylglycerol kinase</fullName>
        <shortName>DAG kinase</shortName>
        <shortName>DAGK</shortName>
        <ecNumber evidence="1">2.7.1.107</ecNumber>
    </recommendedName>
</protein>
<gene>
    <name type="primary">dagK</name>
    <name type="ordered locus">SAUSA300_1879</name>
</gene>
<sequence>MRKRARIIYNPTSGKELFKRELPDALIKLEKAGYETSAYATEKIGDATLEAERAMHENYDVLIAAGGDGTLNEVVNGIAEKPNRPKLGVIPMGTVNDFGRALHIPNDIMGALDVIIEGHSTKVDIGKMNNRYFINLAAGGQLTQVSYETPSKLKSIVGPFAYYIKGFEMLPQMKAVDLRIEYDGNVFQGEALLFFLGLTNSMAGFEKLVPDAKLDDGYFTLIIVEKSNLAELGHIMTLASRGEHTKHPKVIYEKAKAINISSFTDLQLNVDGEYGGKLPANFLNLERHIDVFAPNDIVNEELINNDHVDDNLIEE</sequence>
<feature type="chain" id="PRO_0000386487" description="Diacylglycerol kinase">
    <location>
        <begin position="1"/>
        <end position="315"/>
    </location>
</feature>
<feature type="domain" description="DAGKc" evidence="2">
    <location>
        <begin position="1"/>
        <end position="132"/>
    </location>
</feature>
<feature type="active site" description="Proton acceptor" evidence="1">
    <location>
        <position position="273"/>
    </location>
</feature>
<feature type="binding site" evidence="2">
    <location>
        <begin position="10"/>
        <end position="14"/>
    </location>
    <ligand>
        <name>ATP</name>
        <dbReference type="ChEBI" id="CHEBI:30616"/>
    </ligand>
</feature>
<feature type="binding site" evidence="2">
    <location>
        <position position="41"/>
    </location>
    <ligand>
        <name>ATP</name>
        <dbReference type="ChEBI" id="CHEBI:30616"/>
    </ligand>
</feature>
<feature type="binding site" evidence="2">
    <location>
        <begin position="67"/>
        <end position="73"/>
    </location>
    <ligand>
        <name>ATP</name>
        <dbReference type="ChEBI" id="CHEBI:30616"/>
    </ligand>
</feature>
<feature type="binding site" evidence="2">
    <location>
        <position position="94"/>
    </location>
    <ligand>
        <name>ATP</name>
        <dbReference type="ChEBI" id="CHEBI:30616"/>
    </ligand>
</feature>
<feature type="binding site" evidence="1">
    <location>
        <position position="213"/>
    </location>
    <ligand>
        <name>Mg(2+)</name>
        <dbReference type="ChEBI" id="CHEBI:18420"/>
    </ligand>
</feature>
<feature type="binding site" evidence="1">
    <location>
        <position position="216"/>
    </location>
    <ligand>
        <name>Mg(2+)</name>
        <dbReference type="ChEBI" id="CHEBI:18420"/>
    </ligand>
</feature>
<feature type="binding site" evidence="1">
    <location>
        <position position="218"/>
    </location>
    <ligand>
        <name>Mg(2+)</name>
        <dbReference type="ChEBI" id="CHEBI:18420"/>
    </ligand>
</feature>
<reference key="1">
    <citation type="journal article" date="2006" name="Lancet">
        <title>Complete genome sequence of USA300, an epidemic clone of community-acquired meticillin-resistant Staphylococcus aureus.</title>
        <authorList>
            <person name="Diep B.A."/>
            <person name="Gill S.R."/>
            <person name="Chang R.F."/>
            <person name="Phan T.H."/>
            <person name="Chen J.H."/>
            <person name="Davidson M.G."/>
            <person name="Lin F."/>
            <person name="Lin J."/>
            <person name="Carleton H.A."/>
            <person name="Mongodin E.F."/>
            <person name="Sensabaugh G.F."/>
            <person name="Perdreau-Remington F."/>
        </authorList>
    </citation>
    <scope>NUCLEOTIDE SEQUENCE [LARGE SCALE GENOMIC DNA]</scope>
    <source>
        <strain>USA300</strain>
    </source>
</reference>
<keyword id="KW-0067">ATP-binding</keyword>
<keyword id="KW-0418">Kinase</keyword>
<keyword id="KW-0444">Lipid biosynthesis</keyword>
<keyword id="KW-0443">Lipid metabolism</keyword>
<keyword id="KW-0460">Magnesium</keyword>
<keyword id="KW-0479">Metal-binding</keyword>
<keyword id="KW-0547">Nucleotide-binding</keyword>
<keyword id="KW-0594">Phospholipid biosynthesis</keyword>
<keyword id="KW-1208">Phospholipid metabolism</keyword>
<keyword id="KW-0808">Transferase</keyword>
<organism>
    <name type="scientific">Staphylococcus aureus (strain USA300)</name>
    <dbReference type="NCBI Taxonomy" id="367830"/>
    <lineage>
        <taxon>Bacteria</taxon>
        <taxon>Bacillati</taxon>
        <taxon>Bacillota</taxon>
        <taxon>Bacilli</taxon>
        <taxon>Bacillales</taxon>
        <taxon>Staphylococcaceae</taxon>
        <taxon>Staphylococcus</taxon>
    </lineage>
</organism>
<dbReference type="EC" id="2.7.1.107" evidence="1"/>
<dbReference type="EMBL" id="CP000255">
    <property type="protein sequence ID" value="ABD21350.1"/>
    <property type="molecule type" value="Genomic_DNA"/>
</dbReference>
<dbReference type="RefSeq" id="WP_001231451.1">
    <property type="nucleotide sequence ID" value="NZ_CP027476.1"/>
</dbReference>
<dbReference type="SMR" id="Q2FFJ7"/>
<dbReference type="KEGG" id="saa:SAUSA300_1879"/>
<dbReference type="HOGENOM" id="CLU_045532_1_0_9"/>
<dbReference type="OMA" id="YFMNIAA"/>
<dbReference type="Proteomes" id="UP000001939">
    <property type="component" value="Chromosome"/>
</dbReference>
<dbReference type="GO" id="GO:0005886">
    <property type="term" value="C:plasma membrane"/>
    <property type="evidence" value="ECO:0007669"/>
    <property type="project" value="TreeGrafter"/>
</dbReference>
<dbReference type="GO" id="GO:0005524">
    <property type="term" value="F:ATP binding"/>
    <property type="evidence" value="ECO:0007669"/>
    <property type="project" value="UniProtKB-KW"/>
</dbReference>
<dbReference type="GO" id="GO:0004143">
    <property type="term" value="F:ATP-dependent diacylglycerol kinase activity"/>
    <property type="evidence" value="ECO:0007669"/>
    <property type="project" value="UniProtKB-EC"/>
</dbReference>
<dbReference type="GO" id="GO:0046872">
    <property type="term" value="F:metal ion binding"/>
    <property type="evidence" value="ECO:0007669"/>
    <property type="project" value="UniProtKB-KW"/>
</dbReference>
<dbReference type="GO" id="GO:0008654">
    <property type="term" value="P:phospholipid biosynthetic process"/>
    <property type="evidence" value="ECO:0007669"/>
    <property type="project" value="UniProtKB-KW"/>
</dbReference>
<dbReference type="FunFam" id="2.60.200.40:FF:000015">
    <property type="entry name" value="Diacylglycerol kinase"/>
    <property type="match status" value="1"/>
</dbReference>
<dbReference type="FunFam" id="3.40.50.10330:FF:000008">
    <property type="entry name" value="Probable lipid kinase YegS"/>
    <property type="match status" value="1"/>
</dbReference>
<dbReference type="Gene3D" id="2.60.200.40">
    <property type="match status" value="1"/>
</dbReference>
<dbReference type="Gene3D" id="3.40.50.10330">
    <property type="entry name" value="Probable inorganic polyphosphate/atp-NAD kinase, domain 1"/>
    <property type="match status" value="1"/>
</dbReference>
<dbReference type="InterPro" id="IPR017438">
    <property type="entry name" value="ATP-NAD_kinase_N"/>
</dbReference>
<dbReference type="InterPro" id="IPR005218">
    <property type="entry name" value="Diacylglycerol/lipid_kinase"/>
</dbReference>
<dbReference type="InterPro" id="IPR001206">
    <property type="entry name" value="Diacylglycerol_kinase_cat_dom"/>
</dbReference>
<dbReference type="InterPro" id="IPR050187">
    <property type="entry name" value="Lipid_Phosphate_FormReg"/>
</dbReference>
<dbReference type="InterPro" id="IPR016064">
    <property type="entry name" value="NAD/diacylglycerol_kinase_sf"/>
</dbReference>
<dbReference type="InterPro" id="IPR045540">
    <property type="entry name" value="YegS/DAGK_C"/>
</dbReference>
<dbReference type="NCBIfam" id="NF009603">
    <property type="entry name" value="PRK13055.1"/>
    <property type="match status" value="1"/>
</dbReference>
<dbReference type="NCBIfam" id="NF009874">
    <property type="entry name" value="PRK13337.1"/>
    <property type="match status" value="1"/>
</dbReference>
<dbReference type="NCBIfam" id="TIGR00147">
    <property type="entry name" value="YegS/Rv2252/BmrU family lipid kinase"/>
    <property type="match status" value="1"/>
</dbReference>
<dbReference type="PANTHER" id="PTHR12358:SF106">
    <property type="entry name" value="LIPID KINASE YEGS"/>
    <property type="match status" value="1"/>
</dbReference>
<dbReference type="PANTHER" id="PTHR12358">
    <property type="entry name" value="SPHINGOSINE KINASE"/>
    <property type="match status" value="1"/>
</dbReference>
<dbReference type="Pfam" id="PF00781">
    <property type="entry name" value="DAGK_cat"/>
    <property type="match status" value="1"/>
</dbReference>
<dbReference type="Pfam" id="PF19279">
    <property type="entry name" value="YegS_C"/>
    <property type="match status" value="1"/>
</dbReference>
<dbReference type="SMART" id="SM00046">
    <property type="entry name" value="DAGKc"/>
    <property type="match status" value="1"/>
</dbReference>
<dbReference type="SUPFAM" id="SSF111331">
    <property type="entry name" value="NAD kinase/diacylglycerol kinase-like"/>
    <property type="match status" value="1"/>
</dbReference>
<dbReference type="PROSITE" id="PS50146">
    <property type="entry name" value="DAGK"/>
    <property type="match status" value="1"/>
</dbReference>
<comment type="function">
    <text evidence="1">Catalyzes the phosphorylation of diacylglycerol (DAG) into phosphatidic acid. Is a key enzyme involved in the production of lipoteichoic acid by reintroducing DAG formed from the breakdown of membrane phospholipids into the phosphatidylglycerol biosynthetic pathway.</text>
</comment>
<comment type="catalytic activity">
    <reaction evidence="1">
        <text>a 1,2-diacyl-sn-glycerol + ATP = a 1,2-diacyl-sn-glycero-3-phosphate + ADP + H(+)</text>
        <dbReference type="Rhea" id="RHEA:10272"/>
        <dbReference type="ChEBI" id="CHEBI:15378"/>
        <dbReference type="ChEBI" id="CHEBI:17815"/>
        <dbReference type="ChEBI" id="CHEBI:30616"/>
        <dbReference type="ChEBI" id="CHEBI:58608"/>
        <dbReference type="ChEBI" id="CHEBI:456216"/>
        <dbReference type="EC" id="2.7.1.107"/>
    </reaction>
</comment>
<comment type="cofactor">
    <cofactor evidence="1">
        <name>Mg(2+)</name>
        <dbReference type="ChEBI" id="CHEBI:18420"/>
    </cofactor>
    <text evidence="1">Binds 1 Mg(2+) ion per subunit. This ion appears to have a structural role and is required for catalytic activity.</text>
</comment>
<comment type="subunit">
    <text evidence="1">Homodimer.</text>
</comment>
<comment type="similarity">
    <text evidence="3">Belongs to the diacylglycerol/lipid kinase family.</text>
</comment>
<evidence type="ECO:0000250" key="1">
    <source>
        <dbReference type="UniProtKB" id="Q6GFF9"/>
    </source>
</evidence>
<evidence type="ECO:0000255" key="2">
    <source>
        <dbReference type="PROSITE-ProRule" id="PRU00783"/>
    </source>
</evidence>
<evidence type="ECO:0000305" key="3"/>